<proteinExistence type="inferred from homology"/>
<protein>
    <recommendedName>
        <fullName evidence="1">Large ribosomal subunit protein bL12</fullName>
    </recommendedName>
    <alternativeName>
        <fullName evidence="2">50S ribosomal protein L7/L12</fullName>
    </alternativeName>
</protein>
<sequence length="123" mass="12695">MSKEEIIQAIKGMSVLELNELVKACEEEFGVSAAAPVAVAGGAAAGGGDAAEEKTEFDVVLKASGSEKIKVIKAVREVTGLGLKEAKALVDGAPKPLKEAVSKEDAEAIKAKFEEIGAEIELK</sequence>
<accession>B9DYA0</accession>
<evidence type="ECO:0000255" key="1">
    <source>
        <dbReference type="HAMAP-Rule" id="MF_00368"/>
    </source>
</evidence>
<evidence type="ECO:0000305" key="2"/>
<dbReference type="EMBL" id="AP009049">
    <property type="protein sequence ID" value="BAH05225.1"/>
    <property type="molecule type" value="Genomic_DNA"/>
</dbReference>
<dbReference type="RefSeq" id="WP_011988795.1">
    <property type="nucleotide sequence ID" value="NC_011837.1"/>
</dbReference>
<dbReference type="SMR" id="B9DYA0"/>
<dbReference type="KEGG" id="ckr:CKR_0174"/>
<dbReference type="HOGENOM" id="CLU_086499_3_2_9"/>
<dbReference type="Proteomes" id="UP000007969">
    <property type="component" value="Chromosome"/>
</dbReference>
<dbReference type="GO" id="GO:0022625">
    <property type="term" value="C:cytosolic large ribosomal subunit"/>
    <property type="evidence" value="ECO:0007669"/>
    <property type="project" value="TreeGrafter"/>
</dbReference>
<dbReference type="GO" id="GO:0003729">
    <property type="term" value="F:mRNA binding"/>
    <property type="evidence" value="ECO:0007669"/>
    <property type="project" value="TreeGrafter"/>
</dbReference>
<dbReference type="GO" id="GO:0003735">
    <property type="term" value="F:structural constituent of ribosome"/>
    <property type="evidence" value="ECO:0007669"/>
    <property type="project" value="InterPro"/>
</dbReference>
<dbReference type="GO" id="GO:0006412">
    <property type="term" value="P:translation"/>
    <property type="evidence" value="ECO:0007669"/>
    <property type="project" value="UniProtKB-UniRule"/>
</dbReference>
<dbReference type="CDD" id="cd00387">
    <property type="entry name" value="Ribosomal_L7_L12"/>
    <property type="match status" value="1"/>
</dbReference>
<dbReference type="FunFam" id="1.20.5.710:FF:000002">
    <property type="entry name" value="50S ribosomal protein L7/L12"/>
    <property type="match status" value="1"/>
</dbReference>
<dbReference type="FunFam" id="3.30.1390.10:FF:000001">
    <property type="entry name" value="50S ribosomal protein L7/L12"/>
    <property type="match status" value="1"/>
</dbReference>
<dbReference type="Gene3D" id="3.30.1390.10">
    <property type="match status" value="1"/>
</dbReference>
<dbReference type="Gene3D" id="1.20.5.710">
    <property type="entry name" value="Single helix bin"/>
    <property type="match status" value="1"/>
</dbReference>
<dbReference type="HAMAP" id="MF_00368">
    <property type="entry name" value="Ribosomal_bL12"/>
    <property type="match status" value="1"/>
</dbReference>
<dbReference type="InterPro" id="IPR000206">
    <property type="entry name" value="Ribosomal_bL12"/>
</dbReference>
<dbReference type="InterPro" id="IPR013823">
    <property type="entry name" value="Ribosomal_bL12_C"/>
</dbReference>
<dbReference type="InterPro" id="IPR014719">
    <property type="entry name" value="Ribosomal_bL12_C/ClpS-like"/>
</dbReference>
<dbReference type="InterPro" id="IPR008932">
    <property type="entry name" value="Ribosomal_bL12_oligo"/>
</dbReference>
<dbReference type="InterPro" id="IPR036235">
    <property type="entry name" value="Ribosomal_bL12_oligo_N_sf"/>
</dbReference>
<dbReference type="NCBIfam" id="TIGR00855">
    <property type="entry name" value="L12"/>
    <property type="match status" value="1"/>
</dbReference>
<dbReference type="PANTHER" id="PTHR45987">
    <property type="entry name" value="39S RIBOSOMAL PROTEIN L12"/>
    <property type="match status" value="1"/>
</dbReference>
<dbReference type="PANTHER" id="PTHR45987:SF4">
    <property type="entry name" value="LARGE RIBOSOMAL SUBUNIT PROTEIN BL12M"/>
    <property type="match status" value="1"/>
</dbReference>
<dbReference type="Pfam" id="PF00542">
    <property type="entry name" value="Ribosomal_L12"/>
    <property type="match status" value="1"/>
</dbReference>
<dbReference type="Pfam" id="PF16320">
    <property type="entry name" value="Ribosomal_L12_N"/>
    <property type="match status" value="1"/>
</dbReference>
<dbReference type="SUPFAM" id="SSF54736">
    <property type="entry name" value="ClpS-like"/>
    <property type="match status" value="1"/>
</dbReference>
<dbReference type="SUPFAM" id="SSF48300">
    <property type="entry name" value="Ribosomal protein L7/12, oligomerisation (N-terminal) domain"/>
    <property type="match status" value="1"/>
</dbReference>
<reference key="1">
    <citation type="submission" date="2005-09" db="EMBL/GenBank/DDBJ databases">
        <title>Complete genome sequence of Clostridium kluyveri and comparative genomics of Clostridia species.</title>
        <authorList>
            <person name="Inui M."/>
            <person name="Nonaka H."/>
            <person name="Shinoda Y."/>
            <person name="Ikenaga Y."/>
            <person name="Abe M."/>
            <person name="Naito K."/>
            <person name="Vertes A.A."/>
            <person name="Yukawa H."/>
        </authorList>
    </citation>
    <scope>NUCLEOTIDE SEQUENCE [LARGE SCALE GENOMIC DNA]</scope>
    <source>
        <strain>NBRC 12016</strain>
    </source>
</reference>
<comment type="function">
    <text evidence="1">Forms part of the ribosomal stalk which helps the ribosome interact with GTP-bound translation factors. Is thus essential for accurate translation.</text>
</comment>
<comment type="subunit">
    <text evidence="1">Homodimer. Part of the ribosomal stalk of the 50S ribosomal subunit. Forms a multimeric L10(L12)X complex, where L10 forms an elongated spine to which 2 to 4 L12 dimers bind in a sequential fashion. Binds GTP-bound translation factors.</text>
</comment>
<comment type="similarity">
    <text evidence="1">Belongs to the bacterial ribosomal protein bL12 family.</text>
</comment>
<name>RL7_CLOK1</name>
<keyword id="KW-0687">Ribonucleoprotein</keyword>
<keyword id="KW-0689">Ribosomal protein</keyword>
<feature type="chain" id="PRO_1000195785" description="Large ribosomal subunit protein bL12">
    <location>
        <begin position="1"/>
        <end position="123"/>
    </location>
</feature>
<organism>
    <name type="scientific">Clostridium kluyveri (strain NBRC 12016)</name>
    <dbReference type="NCBI Taxonomy" id="583346"/>
    <lineage>
        <taxon>Bacteria</taxon>
        <taxon>Bacillati</taxon>
        <taxon>Bacillota</taxon>
        <taxon>Clostridia</taxon>
        <taxon>Eubacteriales</taxon>
        <taxon>Clostridiaceae</taxon>
        <taxon>Clostridium</taxon>
    </lineage>
</organism>
<gene>
    <name evidence="1" type="primary">rplL</name>
    <name type="ordered locus">CKR_0174</name>
</gene>